<protein>
    <recommendedName>
        <fullName evidence="1">PTS system MurNAc-GlcNAc-specific EIIBC component</fullName>
    </recommendedName>
    <domain>
        <recommendedName>
            <fullName>MurNAc-GlcNAc-specific phosphotransferase enzyme IIB component</fullName>
            <ecNumber evidence="1">2.7.1.-</ecNumber>
        </recommendedName>
        <alternativeName>
            <fullName>PTS system MurNAc-GlcNAc-specific EIIB component</fullName>
        </alternativeName>
    </domain>
    <domain>
        <recommendedName>
            <fullName>MurNAc-GlcNAc permease IIC component</fullName>
        </recommendedName>
        <alternativeName>
            <fullName>PTS system MurNAc-GlcNAc-specific EIIC component</fullName>
        </alternativeName>
    </domain>
</protein>
<name>PTXBC_STAAW</name>
<dbReference type="EC" id="2.7.1.-" evidence="1"/>
<dbReference type="EMBL" id="BA000033">
    <property type="protein sequence ID" value="BAB94031.1"/>
    <property type="molecule type" value="Genomic_DNA"/>
</dbReference>
<dbReference type="RefSeq" id="WP_000159750.1">
    <property type="nucleotide sequence ID" value="NC_003923.1"/>
</dbReference>
<dbReference type="SMR" id="Q7A1Y1"/>
<dbReference type="KEGG" id="sam:MW0166"/>
<dbReference type="HOGENOM" id="CLU_012312_2_0_9"/>
<dbReference type="UniPathway" id="UPA00544"/>
<dbReference type="GO" id="GO:0005886">
    <property type="term" value="C:plasma membrane"/>
    <property type="evidence" value="ECO:0007669"/>
    <property type="project" value="UniProtKB-SubCell"/>
</dbReference>
<dbReference type="GO" id="GO:0016301">
    <property type="term" value="F:kinase activity"/>
    <property type="evidence" value="ECO:0007669"/>
    <property type="project" value="UniProtKB-KW"/>
</dbReference>
<dbReference type="GO" id="GO:0008982">
    <property type="term" value="F:protein-N(PI)-phosphohistidine-sugar phosphotransferase activity"/>
    <property type="evidence" value="ECO:0007669"/>
    <property type="project" value="InterPro"/>
</dbReference>
<dbReference type="GO" id="GO:0090588">
    <property type="term" value="F:protein-phosphocysteine-N-acetylmuramate phosphotransferase system transporter activity"/>
    <property type="evidence" value="ECO:0007669"/>
    <property type="project" value="TreeGrafter"/>
</dbReference>
<dbReference type="GO" id="GO:0009254">
    <property type="term" value="P:peptidoglycan turnover"/>
    <property type="evidence" value="ECO:0007669"/>
    <property type="project" value="UniProtKB-UniPathway"/>
</dbReference>
<dbReference type="GO" id="GO:0009401">
    <property type="term" value="P:phosphoenolpyruvate-dependent sugar phosphotransferase system"/>
    <property type="evidence" value="ECO:0007669"/>
    <property type="project" value="UniProtKB-KW"/>
</dbReference>
<dbReference type="CDD" id="cd00212">
    <property type="entry name" value="PTS_IIB_glc"/>
    <property type="match status" value="1"/>
</dbReference>
<dbReference type="FunFam" id="3.30.1360.60:FF:000001">
    <property type="entry name" value="PTS system glucose-specific IIBC component PtsG"/>
    <property type="match status" value="1"/>
</dbReference>
<dbReference type="Gene3D" id="3.30.1360.60">
    <property type="entry name" value="Glucose permease domain IIB"/>
    <property type="match status" value="1"/>
</dbReference>
<dbReference type="InterPro" id="IPR036878">
    <property type="entry name" value="Glu_permease_IIB"/>
</dbReference>
<dbReference type="InterPro" id="IPR018113">
    <property type="entry name" value="PTrfase_EIIB_Cys"/>
</dbReference>
<dbReference type="InterPro" id="IPR003352">
    <property type="entry name" value="PTS_EIIC"/>
</dbReference>
<dbReference type="InterPro" id="IPR013013">
    <property type="entry name" value="PTS_EIIC_1"/>
</dbReference>
<dbReference type="InterPro" id="IPR001996">
    <property type="entry name" value="PTS_IIB_1"/>
</dbReference>
<dbReference type="InterPro" id="IPR050558">
    <property type="entry name" value="PTS_Sugar-Specific_Components"/>
</dbReference>
<dbReference type="PANTHER" id="PTHR30175">
    <property type="entry name" value="PHOSPHOTRANSFERASE SYSTEM TRANSPORT PROTEIN"/>
    <property type="match status" value="1"/>
</dbReference>
<dbReference type="PANTHER" id="PTHR30175:SF3">
    <property type="entry name" value="PTS SYSTEM N-ACETYLMURAMIC ACID-SPECIFIC EIIBC COMPONENT"/>
    <property type="match status" value="1"/>
</dbReference>
<dbReference type="Pfam" id="PF00367">
    <property type="entry name" value="PTS_EIIB"/>
    <property type="match status" value="1"/>
</dbReference>
<dbReference type="Pfam" id="PF02378">
    <property type="entry name" value="PTS_EIIC"/>
    <property type="match status" value="1"/>
</dbReference>
<dbReference type="SUPFAM" id="SSF55604">
    <property type="entry name" value="Glucose permease domain IIB"/>
    <property type="match status" value="1"/>
</dbReference>
<dbReference type="PROSITE" id="PS51098">
    <property type="entry name" value="PTS_EIIB_TYPE_1"/>
    <property type="match status" value="1"/>
</dbReference>
<dbReference type="PROSITE" id="PS01035">
    <property type="entry name" value="PTS_EIIB_TYPE_1_CYS"/>
    <property type="match status" value="1"/>
</dbReference>
<dbReference type="PROSITE" id="PS51103">
    <property type="entry name" value="PTS_EIIC_TYPE_1"/>
    <property type="match status" value="1"/>
</dbReference>
<feature type="chain" id="PRO_0000272180" description="PTS system MurNAc-GlcNAc-specific EIIBC component">
    <location>
        <begin position="1"/>
        <end position="484"/>
    </location>
</feature>
<feature type="transmembrane region" description="Helical" evidence="3">
    <location>
        <begin position="135"/>
        <end position="155"/>
    </location>
</feature>
<feature type="transmembrane region" description="Helical" evidence="3">
    <location>
        <begin position="160"/>
        <end position="180"/>
    </location>
</feature>
<feature type="transmembrane region" description="Helical" evidence="3">
    <location>
        <begin position="200"/>
        <end position="220"/>
    </location>
</feature>
<feature type="transmembrane region" description="Helical" evidence="3">
    <location>
        <begin position="234"/>
        <end position="254"/>
    </location>
</feature>
<feature type="transmembrane region" description="Helical" evidence="3">
    <location>
        <begin position="274"/>
        <end position="294"/>
    </location>
</feature>
<feature type="transmembrane region" description="Helical" evidence="3">
    <location>
        <begin position="305"/>
        <end position="325"/>
    </location>
</feature>
<feature type="transmembrane region" description="Helical" evidence="3">
    <location>
        <begin position="349"/>
        <end position="369"/>
    </location>
</feature>
<feature type="transmembrane region" description="Helical" evidence="3">
    <location>
        <begin position="384"/>
        <end position="404"/>
    </location>
</feature>
<feature type="transmembrane region" description="Helical" evidence="3">
    <location>
        <begin position="408"/>
        <end position="428"/>
    </location>
</feature>
<feature type="transmembrane region" description="Helical" evidence="3">
    <location>
        <begin position="450"/>
        <end position="470"/>
    </location>
</feature>
<feature type="domain" description="PTS EIIB type-1" evidence="2">
    <location>
        <begin position="5"/>
        <end position="87"/>
    </location>
</feature>
<feature type="domain" description="PTS EIIC type-1" evidence="3">
    <location>
        <begin position="130"/>
        <end position="484"/>
    </location>
</feature>
<feature type="active site" description="Phosphocysteine intermediate; for EIIB activity" evidence="2">
    <location>
        <position position="27"/>
    </location>
</feature>
<organism>
    <name type="scientific">Staphylococcus aureus (strain MW2)</name>
    <dbReference type="NCBI Taxonomy" id="196620"/>
    <lineage>
        <taxon>Bacteria</taxon>
        <taxon>Bacillati</taxon>
        <taxon>Bacillota</taxon>
        <taxon>Bacilli</taxon>
        <taxon>Bacillales</taxon>
        <taxon>Staphylococcaceae</taxon>
        <taxon>Staphylococcus</taxon>
    </lineage>
</organism>
<comment type="function">
    <text evidence="1">The phosphoenolpyruvate-dependent sugar phosphotransferase system (sugar PTS), a major carbohydrate active transport system, catalyzes the phosphorylation of incoming sugar substrates concomitantly with their translocation across the cell membrane. This system is involved in the uptake and phosphorylation of MurNAc-GlcNAc, the principle peptidoglycan turnover product of S.aureus, yielding cytoplasmic MurNAc 6P-GlcNAc.</text>
</comment>
<comment type="catalytic activity">
    <reaction evidence="1">
        <text>N-acetyl-beta-D-muramate-(1-&gt;4)-N-acetyl-D-glucosamine(out) + N(pros)-phospho-L-histidyl-[protein] = 6-phospho-N-acetyl-beta-D-muramate-(1-&gt;4)-N-acetyl-D-glucosamine(in) + L-histidyl-[protein]</text>
        <dbReference type="Rhea" id="RHEA:66784"/>
        <dbReference type="Rhea" id="RHEA-COMP:9745"/>
        <dbReference type="Rhea" id="RHEA-COMP:9746"/>
        <dbReference type="ChEBI" id="CHEBI:29979"/>
        <dbReference type="ChEBI" id="CHEBI:64837"/>
        <dbReference type="ChEBI" id="CHEBI:167476"/>
        <dbReference type="ChEBI" id="CHEBI:167477"/>
    </reaction>
    <physiologicalReaction direction="left-to-right" evidence="1">
        <dbReference type="Rhea" id="RHEA:66785"/>
    </physiologicalReaction>
</comment>
<comment type="pathway">
    <text evidence="1">Cell wall biogenesis; peptidoglycan recycling.</text>
</comment>
<comment type="subcellular location">
    <subcellularLocation>
        <location evidence="3">Cell membrane</location>
        <topology evidence="3">Multi-pass membrane protein</topology>
    </subcellularLocation>
</comment>
<comment type="domain">
    <text>The EIIB domain is phosphorylated by phospho-EIIA on a cysteinyl or histidyl residue, depending on the transported sugar. Then, it transfers the phosphoryl group to the sugar substrate concomitantly with the sugar uptake processed by the EIIC domain.</text>
</comment>
<comment type="domain">
    <text>The EIIC domain forms the PTS system translocation channel and contains the specific substrate-binding site.</text>
</comment>
<sequence>MTKEQQLAERIIAAVGGMDNIDSVMNCMTRVRIKVLDENKVDDQELRHIDGVMGVIHDERIQVVVGPGTVNKVANHMAELSGVKLGDPIPHHHNDSEKMDYKSYAADKAKANKEAHKAKQKNGKLNKVLKSIANIFIPLIPAFIGAGLIGGIAAVLSNLMVAGYISGAWITQLITVFNVIKDGMLAYLAIFTGINAAKEFGATPGLGGVIGGTTLLTGIAGKNILMNVFTGEPLQPGQGGIIGVIFAVWILSIVEKRLHKIVPNAIDIIVTPTIALLIVGLLTIFIFMPLAGFVSDSLVSVVNGIISIGGVFSGFIIGASFLPLVMLGLHHIFTPIHIEMINQSGATYLLPIAAMAGAGQVGAALALWVRCKRNTTLRNTLKGALPVGFLGIGEPLIYGVTLPLGRPFLTACIGGGIGGAVIGGIGHIGAKAIGPSGVSLLPLISDNMYLGYIAGLLAAYAGGFVCTYLFGTTKAMRQTDLLGD</sequence>
<proteinExistence type="inferred from homology"/>
<reference key="1">
    <citation type="journal article" date="2002" name="Lancet">
        <title>Genome and virulence determinants of high virulence community-acquired MRSA.</title>
        <authorList>
            <person name="Baba T."/>
            <person name="Takeuchi F."/>
            <person name="Kuroda M."/>
            <person name="Yuzawa H."/>
            <person name="Aoki K."/>
            <person name="Oguchi A."/>
            <person name="Nagai Y."/>
            <person name="Iwama N."/>
            <person name="Asano K."/>
            <person name="Naimi T."/>
            <person name="Kuroda H."/>
            <person name="Cui L."/>
            <person name="Yamamoto K."/>
            <person name="Hiramatsu K."/>
        </authorList>
    </citation>
    <scope>NUCLEOTIDE SEQUENCE [LARGE SCALE GENOMIC DNA]</scope>
    <source>
        <strain>MW2</strain>
    </source>
</reference>
<evidence type="ECO:0000250" key="1">
    <source>
        <dbReference type="UniProtKB" id="Q2FK70"/>
    </source>
</evidence>
<evidence type="ECO:0000255" key="2">
    <source>
        <dbReference type="PROSITE-ProRule" id="PRU00421"/>
    </source>
</evidence>
<evidence type="ECO:0000255" key="3">
    <source>
        <dbReference type="PROSITE-ProRule" id="PRU00426"/>
    </source>
</evidence>
<accession>Q7A1Y1</accession>
<keyword id="KW-1003">Cell membrane</keyword>
<keyword id="KW-0418">Kinase</keyword>
<keyword id="KW-0472">Membrane</keyword>
<keyword id="KW-0598">Phosphotransferase system</keyword>
<keyword id="KW-0762">Sugar transport</keyword>
<keyword id="KW-0808">Transferase</keyword>
<keyword id="KW-0812">Transmembrane</keyword>
<keyword id="KW-1133">Transmembrane helix</keyword>
<keyword id="KW-0813">Transport</keyword>
<gene>
    <name type="ordered locus">MW0166</name>
</gene>